<dbReference type="EC" id="2.7.4.6" evidence="1"/>
<dbReference type="EMBL" id="CP000572">
    <property type="protein sequence ID" value="ABN89854.1"/>
    <property type="molecule type" value="Genomic_DNA"/>
</dbReference>
<dbReference type="RefSeq" id="WP_004193561.1">
    <property type="nucleotide sequence ID" value="NC_009076.1"/>
</dbReference>
<dbReference type="SMR" id="A3NVX4"/>
<dbReference type="GeneID" id="92979081"/>
<dbReference type="KEGG" id="bpl:BURPS1106A_2231"/>
<dbReference type="HOGENOM" id="CLU_060216_8_1_4"/>
<dbReference type="Proteomes" id="UP000006738">
    <property type="component" value="Chromosome I"/>
</dbReference>
<dbReference type="GO" id="GO:0005737">
    <property type="term" value="C:cytoplasm"/>
    <property type="evidence" value="ECO:0007669"/>
    <property type="project" value="UniProtKB-SubCell"/>
</dbReference>
<dbReference type="GO" id="GO:0005524">
    <property type="term" value="F:ATP binding"/>
    <property type="evidence" value="ECO:0007669"/>
    <property type="project" value="UniProtKB-UniRule"/>
</dbReference>
<dbReference type="GO" id="GO:0046872">
    <property type="term" value="F:metal ion binding"/>
    <property type="evidence" value="ECO:0007669"/>
    <property type="project" value="UniProtKB-KW"/>
</dbReference>
<dbReference type="GO" id="GO:0004550">
    <property type="term" value="F:nucleoside diphosphate kinase activity"/>
    <property type="evidence" value="ECO:0007669"/>
    <property type="project" value="UniProtKB-UniRule"/>
</dbReference>
<dbReference type="GO" id="GO:0006241">
    <property type="term" value="P:CTP biosynthetic process"/>
    <property type="evidence" value="ECO:0007669"/>
    <property type="project" value="UniProtKB-UniRule"/>
</dbReference>
<dbReference type="GO" id="GO:0006183">
    <property type="term" value="P:GTP biosynthetic process"/>
    <property type="evidence" value="ECO:0007669"/>
    <property type="project" value="UniProtKB-UniRule"/>
</dbReference>
<dbReference type="GO" id="GO:0006228">
    <property type="term" value="P:UTP biosynthetic process"/>
    <property type="evidence" value="ECO:0007669"/>
    <property type="project" value="UniProtKB-UniRule"/>
</dbReference>
<dbReference type="CDD" id="cd04413">
    <property type="entry name" value="NDPk_I"/>
    <property type="match status" value="1"/>
</dbReference>
<dbReference type="FunFam" id="3.30.70.141:FF:000001">
    <property type="entry name" value="Nucleoside diphosphate kinase"/>
    <property type="match status" value="1"/>
</dbReference>
<dbReference type="Gene3D" id="3.30.70.141">
    <property type="entry name" value="Nucleoside diphosphate kinase-like domain"/>
    <property type="match status" value="1"/>
</dbReference>
<dbReference type="HAMAP" id="MF_00451">
    <property type="entry name" value="NDP_kinase"/>
    <property type="match status" value="1"/>
</dbReference>
<dbReference type="InterPro" id="IPR034907">
    <property type="entry name" value="NDK-like_dom"/>
</dbReference>
<dbReference type="InterPro" id="IPR036850">
    <property type="entry name" value="NDK-like_dom_sf"/>
</dbReference>
<dbReference type="InterPro" id="IPR001564">
    <property type="entry name" value="Nucleoside_diP_kinase"/>
</dbReference>
<dbReference type="InterPro" id="IPR023005">
    <property type="entry name" value="Nucleoside_diP_kinase_AS"/>
</dbReference>
<dbReference type="NCBIfam" id="NF001908">
    <property type="entry name" value="PRK00668.1"/>
    <property type="match status" value="1"/>
</dbReference>
<dbReference type="PANTHER" id="PTHR46161">
    <property type="entry name" value="NUCLEOSIDE DIPHOSPHATE KINASE"/>
    <property type="match status" value="1"/>
</dbReference>
<dbReference type="PANTHER" id="PTHR46161:SF3">
    <property type="entry name" value="NUCLEOSIDE DIPHOSPHATE KINASE DDB_G0292928-RELATED"/>
    <property type="match status" value="1"/>
</dbReference>
<dbReference type="Pfam" id="PF00334">
    <property type="entry name" value="NDK"/>
    <property type="match status" value="1"/>
</dbReference>
<dbReference type="PRINTS" id="PR01243">
    <property type="entry name" value="NUCDPKINASE"/>
</dbReference>
<dbReference type="SMART" id="SM00562">
    <property type="entry name" value="NDK"/>
    <property type="match status" value="1"/>
</dbReference>
<dbReference type="SUPFAM" id="SSF54919">
    <property type="entry name" value="Nucleoside diphosphate kinase, NDK"/>
    <property type="match status" value="1"/>
</dbReference>
<dbReference type="PROSITE" id="PS00469">
    <property type="entry name" value="NDPK"/>
    <property type="match status" value="1"/>
</dbReference>
<dbReference type="PROSITE" id="PS51374">
    <property type="entry name" value="NDPK_LIKE"/>
    <property type="match status" value="1"/>
</dbReference>
<comment type="function">
    <text evidence="1">Major role in the synthesis of nucleoside triphosphates other than ATP. The ATP gamma phosphate is transferred to the NDP beta phosphate via a ping-pong mechanism, using a phosphorylated active-site intermediate.</text>
</comment>
<comment type="catalytic activity">
    <reaction evidence="1">
        <text>a 2'-deoxyribonucleoside 5'-diphosphate + ATP = a 2'-deoxyribonucleoside 5'-triphosphate + ADP</text>
        <dbReference type="Rhea" id="RHEA:44640"/>
        <dbReference type="ChEBI" id="CHEBI:30616"/>
        <dbReference type="ChEBI" id="CHEBI:61560"/>
        <dbReference type="ChEBI" id="CHEBI:73316"/>
        <dbReference type="ChEBI" id="CHEBI:456216"/>
        <dbReference type="EC" id="2.7.4.6"/>
    </reaction>
</comment>
<comment type="catalytic activity">
    <reaction evidence="1">
        <text>a ribonucleoside 5'-diphosphate + ATP = a ribonucleoside 5'-triphosphate + ADP</text>
        <dbReference type="Rhea" id="RHEA:18113"/>
        <dbReference type="ChEBI" id="CHEBI:30616"/>
        <dbReference type="ChEBI" id="CHEBI:57930"/>
        <dbReference type="ChEBI" id="CHEBI:61557"/>
        <dbReference type="ChEBI" id="CHEBI:456216"/>
        <dbReference type="EC" id="2.7.4.6"/>
    </reaction>
</comment>
<comment type="cofactor">
    <cofactor evidence="1">
        <name>Mg(2+)</name>
        <dbReference type="ChEBI" id="CHEBI:18420"/>
    </cofactor>
</comment>
<comment type="subunit">
    <text evidence="1">Homotetramer.</text>
</comment>
<comment type="subcellular location">
    <subcellularLocation>
        <location evidence="1">Cytoplasm</location>
    </subcellularLocation>
</comment>
<comment type="similarity">
    <text evidence="1">Belongs to the NDK family.</text>
</comment>
<organism>
    <name type="scientific">Burkholderia pseudomallei (strain 1106a)</name>
    <dbReference type="NCBI Taxonomy" id="357348"/>
    <lineage>
        <taxon>Bacteria</taxon>
        <taxon>Pseudomonadati</taxon>
        <taxon>Pseudomonadota</taxon>
        <taxon>Betaproteobacteria</taxon>
        <taxon>Burkholderiales</taxon>
        <taxon>Burkholderiaceae</taxon>
        <taxon>Burkholderia</taxon>
        <taxon>pseudomallei group</taxon>
    </lineage>
</organism>
<accession>A3NVX4</accession>
<reference key="1">
    <citation type="journal article" date="2010" name="Genome Biol. Evol.">
        <title>Continuing evolution of Burkholderia mallei through genome reduction and large-scale rearrangements.</title>
        <authorList>
            <person name="Losada L."/>
            <person name="Ronning C.M."/>
            <person name="DeShazer D."/>
            <person name="Woods D."/>
            <person name="Fedorova N."/>
            <person name="Kim H.S."/>
            <person name="Shabalina S.A."/>
            <person name="Pearson T.R."/>
            <person name="Brinkac L."/>
            <person name="Tan P."/>
            <person name="Nandi T."/>
            <person name="Crabtree J."/>
            <person name="Badger J."/>
            <person name="Beckstrom-Sternberg S."/>
            <person name="Saqib M."/>
            <person name="Schutzer S.E."/>
            <person name="Keim P."/>
            <person name="Nierman W.C."/>
        </authorList>
    </citation>
    <scope>NUCLEOTIDE SEQUENCE [LARGE SCALE GENOMIC DNA]</scope>
    <source>
        <strain>1106a</strain>
    </source>
</reference>
<sequence length="141" mass="15562">MALERTLSIIKPDAVAKNVIGQIYSRFENAGLKIVAARMAHLSRADAEKFYAVHAERPFFKDLVDFMISGPVMIQVLEGEDAILKNRDLMGATDPKKAEKGTIRADFADSIDANAVHGSDAPETARAEVAFFFPEMNVYSR</sequence>
<keyword id="KW-0067">ATP-binding</keyword>
<keyword id="KW-0963">Cytoplasm</keyword>
<keyword id="KW-0418">Kinase</keyword>
<keyword id="KW-0460">Magnesium</keyword>
<keyword id="KW-0479">Metal-binding</keyword>
<keyword id="KW-0546">Nucleotide metabolism</keyword>
<keyword id="KW-0547">Nucleotide-binding</keyword>
<keyword id="KW-0597">Phosphoprotein</keyword>
<keyword id="KW-0808">Transferase</keyword>
<name>NDK_BURP0</name>
<feature type="chain" id="PRO_1000026217" description="Nucleoside diphosphate kinase">
    <location>
        <begin position="1"/>
        <end position="141"/>
    </location>
</feature>
<feature type="active site" description="Pros-phosphohistidine intermediate" evidence="1">
    <location>
        <position position="117"/>
    </location>
</feature>
<feature type="binding site" evidence="1">
    <location>
        <position position="11"/>
    </location>
    <ligand>
        <name>ATP</name>
        <dbReference type="ChEBI" id="CHEBI:30616"/>
    </ligand>
</feature>
<feature type="binding site" evidence="1">
    <location>
        <position position="59"/>
    </location>
    <ligand>
        <name>ATP</name>
        <dbReference type="ChEBI" id="CHEBI:30616"/>
    </ligand>
</feature>
<feature type="binding site" evidence="1">
    <location>
        <position position="87"/>
    </location>
    <ligand>
        <name>ATP</name>
        <dbReference type="ChEBI" id="CHEBI:30616"/>
    </ligand>
</feature>
<feature type="binding site" evidence="1">
    <location>
        <position position="93"/>
    </location>
    <ligand>
        <name>ATP</name>
        <dbReference type="ChEBI" id="CHEBI:30616"/>
    </ligand>
</feature>
<feature type="binding site" evidence="1">
    <location>
        <position position="104"/>
    </location>
    <ligand>
        <name>ATP</name>
        <dbReference type="ChEBI" id="CHEBI:30616"/>
    </ligand>
</feature>
<feature type="binding site" evidence="1">
    <location>
        <position position="114"/>
    </location>
    <ligand>
        <name>ATP</name>
        <dbReference type="ChEBI" id="CHEBI:30616"/>
    </ligand>
</feature>
<evidence type="ECO:0000255" key="1">
    <source>
        <dbReference type="HAMAP-Rule" id="MF_00451"/>
    </source>
</evidence>
<protein>
    <recommendedName>
        <fullName evidence="1">Nucleoside diphosphate kinase</fullName>
        <shortName evidence="1">NDK</shortName>
        <shortName evidence="1">NDP kinase</shortName>
        <ecNumber evidence="1">2.7.4.6</ecNumber>
    </recommendedName>
    <alternativeName>
        <fullName evidence="1">Nucleoside-2-P kinase</fullName>
    </alternativeName>
</protein>
<proteinExistence type="inferred from homology"/>
<gene>
    <name evidence="1" type="primary">ndk</name>
    <name type="ordered locus">BURPS1106A_2231</name>
</gene>